<gene>
    <name type="primary">rho</name>
</gene>
<dbReference type="EMBL" id="U97271">
    <property type="protein sequence ID" value="AAB61725.1"/>
    <property type="molecule type" value="Genomic_DNA"/>
</dbReference>
<dbReference type="SMR" id="O42431"/>
<dbReference type="GlyCosmos" id="O42431">
    <property type="glycosylation" value="1 site, No reported glycans"/>
</dbReference>
<dbReference type="GO" id="GO:0016020">
    <property type="term" value="C:membrane"/>
    <property type="evidence" value="ECO:0000250"/>
    <property type="project" value="UniProtKB"/>
</dbReference>
<dbReference type="GO" id="GO:0097381">
    <property type="term" value="C:photoreceptor disc membrane"/>
    <property type="evidence" value="ECO:0000250"/>
    <property type="project" value="UniProtKB"/>
</dbReference>
<dbReference type="GO" id="GO:0005886">
    <property type="term" value="C:plasma membrane"/>
    <property type="evidence" value="ECO:0000250"/>
    <property type="project" value="UniProtKB"/>
</dbReference>
<dbReference type="GO" id="GO:0005502">
    <property type="term" value="F:11-cis retinal binding"/>
    <property type="evidence" value="ECO:0000250"/>
    <property type="project" value="UniProtKB"/>
</dbReference>
<dbReference type="GO" id="GO:0008020">
    <property type="term" value="F:G protein-coupled photoreceptor activity"/>
    <property type="evidence" value="ECO:0000250"/>
    <property type="project" value="UniProtKB"/>
</dbReference>
<dbReference type="GO" id="GO:0016038">
    <property type="term" value="P:absorption of visible light"/>
    <property type="evidence" value="ECO:0000250"/>
    <property type="project" value="UniProtKB"/>
</dbReference>
<dbReference type="GO" id="GO:0016056">
    <property type="term" value="P:G protein-coupled opsin signaling pathway"/>
    <property type="evidence" value="ECO:0000250"/>
    <property type="project" value="UniProtKB"/>
</dbReference>
<dbReference type="GO" id="GO:0007601">
    <property type="term" value="P:visual perception"/>
    <property type="evidence" value="ECO:0007669"/>
    <property type="project" value="UniProtKB-KW"/>
</dbReference>
<dbReference type="FunFam" id="1.20.1070.10:FF:000357">
    <property type="entry name" value="Rhodopsin"/>
    <property type="match status" value="1"/>
</dbReference>
<dbReference type="Gene3D" id="1.20.1070.10">
    <property type="entry name" value="Rhodopsin 7-helix transmembrane proteins"/>
    <property type="match status" value="1"/>
</dbReference>
<dbReference type="InterPro" id="IPR050125">
    <property type="entry name" value="GPCR_opsins"/>
</dbReference>
<dbReference type="InterPro" id="IPR000276">
    <property type="entry name" value="GPCR_Rhodpsn"/>
</dbReference>
<dbReference type="InterPro" id="IPR017452">
    <property type="entry name" value="GPCR_Rhodpsn_7TM"/>
</dbReference>
<dbReference type="InterPro" id="IPR001760">
    <property type="entry name" value="Opsin"/>
</dbReference>
<dbReference type="InterPro" id="IPR027430">
    <property type="entry name" value="Retinal_BS"/>
</dbReference>
<dbReference type="InterPro" id="IPR000732">
    <property type="entry name" value="Rhodopsin"/>
</dbReference>
<dbReference type="PANTHER" id="PTHR24240">
    <property type="entry name" value="OPSIN"/>
    <property type="match status" value="1"/>
</dbReference>
<dbReference type="Pfam" id="PF00001">
    <property type="entry name" value="7tm_1"/>
    <property type="match status" value="1"/>
</dbReference>
<dbReference type="PRINTS" id="PR00237">
    <property type="entry name" value="GPCRRHODOPSN"/>
</dbReference>
<dbReference type="PRINTS" id="PR00238">
    <property type="entry name" value="OPSIN"/>
</dbReference>
<dbReference type="PRINTS" id="PR00579">
    <property type="entry name" value="RHODOPSIN"/>
</dbReference>
<dbReference type="SUPFAM" id="SSF81321">
    <property type="entry name" value="Family A G protein-coupled receptor-like"/>
    <property type="match status" value="1"/>
</dbReference>
<dbReference type="PROSITE" id="PS50262">
    <property type="entry name" value="G_PROTEIN_RECEP_F1_2"/>
    <property type="match status" value="1"/>
</dbReference>
<dbReference type="PROSITE" id="PS00238">
    <property type="entry name" value="OPSIN"/>
    <property type="match status" value="1"/>
</dbReference>
<feature type="chain" id="PRO_0000197680" description="Rhodopsin">
    <location>
        <begin position="1" status="less than"/>
        <end position="289" status="greater than"/>
    </location>
</feature>
<feature type="topological domain" description="Extracellular" evidence="7">
    <location>
        <begin position="1" status="less than"/>
        <end position="7"/>
    </location>
</feature>
<feature type="transmembrane region" description="Helical; Name=1" evidence="1">
    <location>
        <begin position="8"/>
        <end position="32"/>
    </location>
</feature>
<feature type="topological domain" description="Cytoplasmic" evidence="7">
    <location>
        <begin position="33"/>
        <end position="44"/>
    </location>
</feature>
<feature type="transmembrane region" description="Helical; Name=2" evidence="1">
    <location>
        <begin position="45"/>
        <end position="67"/>
    </location>
</feature>
<feature type="topological domain" description="Extracellular" evidence="7">
    <location>
        <begin position="68"/>
        <end position="81"/>
    </location>
</feature>
<feature type="transmembrane region" description="Helical; Name=3" evidence="1">
    <location>
        <begin position="82"/>
        <end position="104"/>
    </location>
</feature>
<feature type="topological domain" description="Cytoplasmic" evidence="7">
    <location>
        <begin position="105"/>
        <end position="123"/>
    </location>
</feature>
<feature type="transmembrane region" description="Helical; Name=4" evidence="1">
    <location>
        <begin position="124"/>
        <end position="144"/>
    </location>
</feature>
<feature type="topological domain" description="Extracellular" evidence="7">
    <location>
        <begin position="145"/>
        <end position="173"/>
    </location>
</feature>
<feature type="transmembrane region" description="Helical; Name=5" evidence="1">
    <location>
        <begin position="174"/>
        <end position="195"/>
    </location>
</feature>
<feature type="topological domain" description="Cytoplasmic" evidence="7">
    <location>
        <begin position="196"/>
        <end position="223"/>
    </location>
</feature>
<feature type="transmembrane region" description="Helical; Name=6" evidence="1">
    <location>
        <begin position="224"/>
        <end position="245"/>
    </location>
</feature>
<feature type="topological domain" description="Extracellular" evidence="7">
    <location>
        <begin position="246"/>
        <end position="257"/>
    </location>
</feature>
<feature type="transmembrane region" description="Helical; Name=7" evidence="1">
    <location>
        <begin position="258"/>
        <end position="279"/>
    </location>
</feature>
<feature type="topological domain" description="Cytoplasmic" evidence="7">
    <location>
        <begin position="280"/>
        <end position="289" status="greater than"/>
    </location>
</feature>
<feature type="short sequence motif" description="'Ionic lock' involved in activated form stabilization" evidence="1">
    <location>
        <begin position="105"/>
        <end position="107"/>
    </location>
</feature>
<feature type="site" description="Plays an important role in the conformation switch to the active conformation" evidence="1">
    <location>
        <position position="84"/>
    </location>
</feature>
<feature type="modified residue" description="N6-(retinylidene)lysine" evidence="1">
    <location>
        <position position="267"/>
    </location>
</feature>
<feature type="glycosylation site" description="N-linked (GlcNAc...) asparagine" evidence="5">
    <location>
        <position position="171"/>
    </location>
</feature>
<feature type="disulfide bond" evidence="6">
    <location>
        <begin position="81"/>
        <end position="158"/>
    </location>
</feature>
<feature type="non-terminal residue">
    <location>
        <position position="1"/>
    </location>
</feature>
<feature type="non-terminal residue">
    <location>
        <position position="289"/>
    </location>
</feature>
<reference key="1">
    <citation type="journal article" date="1997" name="Mol. Phylogenet. Evol.">
        <title>Molecular evolution of the cottoid fish endemic to Lake Baikal deduced from nuclear DNA evidence.</title>
        <authorList>
            <person name="Hunt D.M."/>
            <person name="Fitzgibbon J."/>
            <person name="Slobodyanyuk S.J."/>
            <person name="Bowmaker J.K."/>
            <person name="Dulai K.S."/>
        </authorList>
    </citation>
    <scope>NUCLEOTIDE SEQUENCE [GENOMIC DNA]</scope>
</reference>
<organism>
    <name type="scientific">Limnocottus pallidus</name>
    <name type="common">Ray-finned fish</name>
    <dbReference type="NCBI Taxonomy" id="61634"/>
    <lineage>
        <taxon>Eukaryota</taxon>
        <taxon>Metazoa</taxon>
        <taxon>Chordata</taxon>
        <taxon>Craniata</taxon>
        <taxon>Vertebrata</taxon>
        <taxon>Euteleostomi</taxon>
        <taxon>Actinopterygii</taxon>
        <taxon>Neopterygii</taxon>
        <taxon>Teleostei</taxon>
        <taxon>Neoteleostei</taxon>
        <taxon>Acanthomorphata</taxon>
        <taxon>Eupercaria</taxon>
        <taxon>Perciformes</taxon>
        <taxon>Cottioidei</taxon>
        <taxon>Cottales</taxon>
        <taxon>Cottidae</taxon>
        <taxon>Limnocottus</taxon>
    </lineage>
</organism>
<name>OPSD_LIMPA</name>
<keyword id="KW-0966">Cell projection</keyword>
<keyword id="KW-0157">Chromophore</keyword>
<keyword id="KW-1015">Disulfide bond</keyword>
<keyword id="KW-0297">G-protein coupled receptor</keyword>
<keyword id="KW-0325">Glycoprotein</keyword>
<keyword id="KW-0449">Lipoprotein</keyword>
<keyword id="KW-0472">Membrane</keyword>
<keyword id="KW-0564">Palmitate</keyword>
<keyword id="KW-0597">Phosphoprotein</keyword>
<keyword id="KW-0600">Photoreceptor protein</keyword>
<keyword id="KW-0675">Receptor</keyword>
<keyword id="KW-0681">Retinal protein</keyword>
<keyword id="KW-0716">Sensory transduction</keyword>
<keyword id="KW-0807">Transducer</keyword>
<keyword id="KW-0812">Transmembrane</keyword>
<keyword id="KW-1133">Transmembrane helix</keyword>
<keyword id="KW-0844">Vision</keyword>
<comment type="function">
    <text evidence="1 2 3">Photoreceptor required for image-forming vision at low light intensity. While most salt water fish species use retinal as chromophore, most freshwater fish use 3-dehydroretinal, or a mixture of retinal and 3-dehydroretinal (By similarity). Light-induced isomerization of 11-cis to all-trans retinal triggers a conformational change that activates signaling via G-proteins. Subsequent receptor phosphorylation mediates displacement of the bound G-protein alpha subunit by arrestin and terminates signaling (By similarity).</text>
</comment>
<comment type="subcellular location">
    <subcellularLocation>
        <location evidence="2">Membrane</location>
        <topology evidence="2">Multi-pass membrane protein</topology>
    </subcellularLocation>
    <subcellularLocation>
        <location evidence="4">Cell projection</location>
        <location evidence="4">Cilium</location>
        <location evidence="4">Photoreceptor outer segment</location>
    </subcellularLocation>
    <text evidence="2">Synthesized in the inner segment (IS) of rod photoreceptor cells before vectorial transport to disk membranes in the rod outer segment (OS) photosensory cilia.</text>
</comment>
<comment type="PTM">
    <text evidence="1">Phosphorylated on some or all of the serine and threonine residues present in the C-terminal region.</text>
</comment>
<comment type="PTM">
    <text evidence="1">Contains one covalently linked retinal chromophore.</text>
</comment>
<comment type="similarity">
    <text evidence="6">Belongs to the G-protein coupled receptor 1 family. Opsin subfamily.</text>
</comment>
<accession>O42431</accession>
<sequence>YLVNPAGYAALGAYMFLLILIGFPVNFLTLYVTLEHKKLRTPLNYILLNLAVADLFMVLGGFTTTMYTSMHGYFVLGRLGCNLEGFFATLGGEIALWSLVVLAIERWIVGLKPIRNFRFTEDHAIMGLAFSWVMALSCAVPPLAGWLRYIPEGIQGSCGVDYYTRAEGFNNESFVIYMFTVHFLIPLSVIFFCYGRLLCAVKEAAAAQQESETTQRAEKEVSRMVVIMVIGFLVCWLPYASVAWWIFCNQGSDFGPIFMTLPSFFAKRPAIYNPMIYICMNKQFRHCMI</sequence>
<protein>
    <recommendedName>
        <fullName>Rhodopsin</fullName>
    </recommendedName>
</protein>
<proteinExistence type="inferred from homology"/>
<evidence type="ECO:0000250" key="1">
    <source>
        <dbReference type="UniProtKB" id="P02699"/>
    </source>
</evidence>
<evidence type="ECO:0000250" key="2">
    <source>
        <dbReference type="UniProtKB" id="P08100"/>
    </source>
</evidence>
<evidence type="ECO:0000250" key="3">
    <source>
        <dbReference type="UniProtKB" id="P32309"/>
    </source>
</evidence>
<evidence type="ECO:0000250" key="4">
    <source>
        <dbReference type="UniProtKB" id="P35359"/>
    </source>
</evidence>
<evidence type="ECO:0000255" key="5"/>
<evidence type="ECO:0000255" key="6">
    <source>
        <dbReference type="PROSITE-ProRule" id="PRU00521"/>
    </source>
</evidence>
<evidence type="ECO:0000305" key="7"/>